<sequence length="61" mass="6739">MGMRMMFIIFLFVVLATTVVSFTSGRASDGRNAPANNKVSDLIRQFCCGHYDCDFIPNVCG</sequence>
<protein>
    <recommendedName>
        <fullName evidence="5">Alpha-conotoxin-like Lp1.6a</fullName>
    </recommendedName>
</protein>
<organism>
    <name type="scientific">Conus leopardus</name>
    <name type="common">Leopard cone</name>
    <dbReference type="NCBI Taxonomy" id="101306"/>
    <lineage>
        <taxon>Eukaryota</taxon>
        <taxon>Metazoa</taxon>
        <taxon>Spiralia</taxon>
        <taxon>Lophotrochozoa</taxon>
        <taxon>Mollusca</taxon>
        <taxon>Gastropoda</taxon>
        <taxon>Caenogastropoda</taxon>
        <taxon>Neogastropoda</taxon>
        <taxon>Conoidea</taxon>
        <taxon>Conidae</taxon>
        <taxon>Conus</taxon>
        <taxon>Lithoconus</taxon>
    </lineage>
</organism>
<dbReference type="EMBL" id="DQ311057">
    <property type="protein sequence ID" value="ABD33849.1"/>
    <property type="molecule type" value="Genomic_DNA"/>
</dbReference>
<dbReference type="EMBL" id="DQ359145">
    <property type="protein sequence ID" value="ABD48796.1"/>
    <property type="status" value="ALT_INIT"/>
    <property type="molecule type" value="Genomic_DNA"/>
</dbReference>
<dbReference type="ConoServer" id="547">
    <property type="toxin name" value="Lp1.6a precursor"/>
</dbReference>
<dbReference type="GO" id="GO:0005576">
    <property type="term" value="C:extracellular region"/>
    <property type="evidence" value="ECO:0007669"/>
    <property type="project" value="UniProtKB-SubCell"/>
</dbReference>
<dbReference type="GO" id="GO:0035792">
    <property type="term" value="C:host cell postsynaptic membrane"/>
    <property type="evidence" value="ECO:0007669"/>
    <property type="project" value="UniProtKB-KW"/>
</dbReference>
<dbReference type="GO" id="GO:0030550">
    <property type="term" value="F:acetylcholine receptor inhibitor activity"/>
    <property type="evidence" value="ECO:0007669"/>
    <property type="project" value="UniProtKB-KW"/>
</dbReference>
<dbReference type="GO" id="GO:0099106">
    <property type="term" value="F:ion channel regulator activity"/>
    <property type="evidence" value="ECO:0007669"/>
    <property type="project" value="UniProtKB-KW"/>
</dbReference>
<dbReference type="GO" id="GO:0090729">
    <property type="term" value="F:toxin activity"/>
    <property type="evidence" value="ECO:0007669"/>
    <property type="project" value="UniProtKB-KW"/>
</dbReference>
<dbReference type="InterPro" id="IPR009958">
    <property type="entry name" value="Conotoxin_a-typ"/>
</dbReference>
<dbReference type="Pfam" id="PF07365">
    <property type="entry name" value="Toxin_8"/>
    <property type="match status" value="1"/>
</dbReference>
<comment type="function">
    <text evidence="1">Alpha-conotoxins act on postsynaptic membranes, they bind to the nicotinic acetylcholine receptors (nAChR) and thus inhibit them.</text>
</comment>
<comment type="subcellular location">
    <subcellularLocation>
        <location evidence="7">Secreted</location>
    </subcellularLocation>
</comment>
<comment type="tissue specificity">
    <text evidence="7">Expressed by the venom duct.</text>
</comment>
<comment type="domain">
    <text evidence="6">The cysteine framework is I (CC-C-C). Alpha4/6 pattern.</text>
</comment>
<comment type="similarity">
    <text evidence="6">Belongs to the conotoxin A superfamily.</text>
</comment>
<comment type="sequence caution" evidence="6">
    <conflict type="erroneous initiation">
        <sequence resource="EMBL-CDS" id="ABD48796"/>
    </conflict>
</comment>
<keyword id="KW-0008">Acetylcholine receptor inhibiting toxin</keyword>
<keyword id="KW-0027">Amidation</keyword>
<keyword id="KW-1015">Disulfide bond</keyword>
<keyword id="KW-0872">Ion channel impairing toxin</keyword>
<keyword id="KW-0528">Neurotoxin</keyword>
<keyword id="KW-0629">Postsynaptic neurotoxin</keyword>
<keyword id="KW-0873">Pyrrolidone carboxylic acid</keyword>
<keyword id="KW-0964">Secreted</keyword>
<keyword id="KW-0732">Signal</keyword>
<keyword id="KW-0800">Toxin</keyword>
<feature type="signal peptide" evidence="4">
    <location>
        <begin position="1"/>
        <end position="21"/>
    </location>
</feature>
<feature type="propeptide" id="PRO_0000370652" evidence="1">
    <location>
        <begin position="22"/>
        <end position="44"/>
    </location>
</feature>
<feature type="peptide" id="PRO_0000376850" description="Alpha-conotoxin-like Lp1.6a" evidence="7">
    <location>
        <begin position="45"/>
        <end position="60"/>
    </location>
</feature>
<feature type="modified residue" description="Pyrrolidone carboxylic acid" evidence="2">
    <location>
        <position position="45"/>
    </location>
</feature>
<feature type="modified residue" description="Cysteine amide" evidence="7">
    <location>
        <position position="60"/>
    </location>
</feature>
<feature type="disulfide bond" evidence="3">
    <location>
        <begin position="47"/>
        <end position="53"/>
    </location>
</feature>
<feature type="disulfide bond" evidence="3">
    <location>
        <begin position="48"/>
        <end position="60"/>
    </location>
</feature>
<proteinExistence type="evidence at protein level"/>
<evidence type="ECO:0000250" key="1"/>
<evidence type="ECO:0000250" key="2">
    <source>
        <dbReference type="UniProtKB" id="D4HRK4"/>
    </source>
</evidence>
<evidence type="ECO:0000250" key="3">
    <source>
        <dbReference type="UniProtKB" id="K8DWB5"/>
    </source>
</evidence>
<evidence type="ECO:0000255" key="4"/>
<evidence type="ECO:0000303" key="5">
    <source>
    </source>
</evidence>
<evidence type="ECO:0000305" key="6"/>
<evidence type="ECO:0000305" key="7">
    <source>
    </source>
</evidence>
<reference key="1">
    <citation type="journal article" date="2007" name="Toxicon">
        <title>From the identification of gene organization of alpha conotoxins to the cloning of novel toxins.</title>
        <authorList>
            <person name="Yuan D.-D."/>
            <person name="Han Y.-H."/>
            <person name="Wang C.-G."/>
            <person name="Chi C.-W."/>
        </authorList>
    </citation>
    <scope>NUCLEOTIDE SEQUENCE [GENOMIC DNA]</scope>
    <scope>AMIDATION AT CYS-60</scope>
</reference>
<name>CA16A_CONLE</name>
<accession>P0CAQ6</accession>
<accession>A1X8B7</accession>
<accession>A6M937</accession>
<accession>A6M939</accession>